<feature type="chain" id="PRO_1000138840" description="Orotate phosphoribosyltransferase">
    <location>
        <begin position="1"/>
        <end position="213"/>
    </location>
</feature>
<feature type="binding site" description="in other chain" evidence="1">
    <location>
        <position position="26"/>
    </location>
    <ligand>
        <name>5-phospho-alpha-D-ribose 1-diphosphate</name>
        <dbReference type="ChEBI" id="CHEBI:58017"/>
        <note>ligand shared between dimeric partners</note>
    </ligand>
</feature>
<feature type="binding site" evidence="1">
    <location>
        <begin position="34"/>
        <end position="35"/>
    </location>
    <ligand>
        <name>orotate</name>
        <dbReference type="ChEBI" id="CHEBI:30839"/>
    </ligand>
</feature>
<feature type="binding site" description="in other chain" evidence="1">
    <location>
        <begin position="72"/>
        <end position="73"/>
    </location>
    <ligand>
        <name>5-phospho-alpha-D-ribose 1-diphosphate</name>
        <dbReference type="ChEBI" id="CHEBI:58017"/>
        <note>ligand shared between dimeric partners</note>
    </ligand>
</feature>
<feature type="binding site" evidence="1">
    <location>
        <position position="99"/>
    </location>
    <ligand>
        <name>5-phospho-alpha-D-ribose 1-diphosphate</name>
        <dbReference type="ChEBI" id="CHEBI:58017"/>
        <note>ligand shared between dimeric partners</note>
    </ligand>
</feature>
<feature type="binding site" description="in other chain" evidence="1">
    <location>
        <position position="100"/>
    </location>
    <ligand>
        <name>5-phospho-alpha-D-ribose 1-diphosphate</name>
        <dbReference type="ChEBI" id="CHEBI:58017"/>
        <note>ligand shared between dimeric partners</note>
    </ligand>
</feature>
<feature type="binding site" evidence="1">
    <location>
        <position position="103"/>
    </location>
    <ligand>
        <name>5-phospho-alpha-D-ribose 1-diphosphate</name>
        <dbReference type="ChEBI" id="CHEBI:58017"/>
        <note>ligand shared between dimeric partners</note>
    </ligand>
</feature>
<feature type="binding site" evidence="1">
    <location>
        <position position="105"/>
    </location>
    <ligand>
        <name>5-phospho-alpha-D-ribose 1-diphosphate</name>
        <dbReference type="ChEBI" id="CHEBI:58017"/>
        <note>ligand shared between dimeric partners</note>
    </ligand>
</feature>
<feature type="binding site" description="in other chain" evidence="1">
    <location>
        <begin position="124"/>
        <end position="132"/>
    </location>
    <ligand>
        <name>5-phospho-alpha-D-ribose 1-diphosphate</name>
        <dbReference type="ChEBI" id="CHEBI:58017"/>
        <note>ligand shared between dimeric partners</note>
    </ligand>
</feature>
<feature type="binding site" evidence="1">
    <location>
        <position position="128"/>
    </location>
    <ligand>
        <name>orotate</name>
        <dbReference type="ChEBI" id="CHEBI:30839"/>
    </ligand>
</feature>
<feature type="binding site" evidence="1">
    <location>
        <position position="156"/>
    </location>
    <ligand>
        <name>orotate</name>
        <dbReference type="ChEBI" id="CHEBI:30839"/>
    </ligand>
</feature>
<comment type="function">
    <text evidence="1">Catalyzes the transfer of a ribosyl phosphate group from 5-phosphoribose 1-diphosphate to orotate, leading to the formation of orotidine monophosphate (OMP).</text>
</comment>
<comment type="catalytic activity">
    <reaction evidence="1">
        <text>orotidine 5'-phosphate + diphosphate = orotate + 5-phospho-alpha-D-ribose 1-diphosphate</text>
        <dbReference type="Rhea" id="RHEA:10380"/>
        <dbReference type="ChEBI" id="CHEBI:30839"/>
        <dbReference type="ChEBI" id="CHEBI:33019"/>
        <dbReference type="ChEBI" id="CHEBI:57538"/>
        <dbReference type="ChEBI" id="CHEBI:58017"/>
        <dbReference type="EC" id="2.4.2.10"/>
    </reaction>
</comment>
<comment type="cofactor">
    <cofactor evidence="1">
        <name>Mg(2+)</name>
        <dbReference type="ChEBI" id="CHEBI:18420"/>
    </cofactor>
</comment>
<comment type="pathway">
    <text evidence="1">Pyrimidine metabolism; UMP biosynthesis via de novo pathway; UMP from orotate: step 1/2.</text>
</comment>
<comment type="subunit">
    <text evidence="1">Homodimer.</text>
</comment>
<comment type="similarity">
    <text evidence="1">Belongs to the purine/pyrimidine phosphoribosyltransferase family. PyrE subfamily.</text>
</comment>
<protein>
    <recommendedName>
        <fullName evidence="1">Orotate phosphoribosyltransferase</fullName>
        <shortName evidence="1">OPRT</shortName>
        <shortName evidence="1">OPRTase</shortName>
        <ecNumber evidence="1">2.4.2.10</ecNumber>
    </recommendedName>
</protein>
<gene>
    <name evidence="1" type="primary">pyrE</name>
    <name type="ordered locus">VFMJ11_0110</name>
</gene>
<reference key="1">
    <citation type="submission" date="2008-08" db="EMBL/GenBank/DDBJ databases">
        <title>Complete sequence of Vibrio fischeri strain MJ11.</title>
        <authorList>
            <person name="Mandel M.J."/>
            <person name="Stabb E.V."/>
            <person name="Ruby E.G."/>
            <person name="Ferriera S."/>
            <person name="Johnson J."/>
            <person name="Kravitz S."/>
            <person name="Beeson K."/>
            <person name="Sutton G."/>
            <person name="Rogers Y.-H."/>
            <person name="Friedman R."/>
            <person name="Frazier M."/>
            <person name="Venter J.C."/>
        </authorList>
    </citation>
    <scope>NUCLEOTIDE SEQUENCE [LARGE SCALE GENOMIC DNA]</scope>
    <source>
        <strain>MJ11</strain>
    </source>
</reference>
<accession>B5FFE3</accession>
<dbReference type="EC" id="2.4.2.10" evidence="1"/>
<dbReference type="EMBL" id="CP001139">
    <property type="protein sequence ID" value="ACH65126.1"/>
    <property type="molecule type" value="Genomic_DNA"/>
</dbReference>
<dbReference type="RefSeq" id="WP_005417014.1">
    <property type="nucleotide sequence ID" value="NC_011184.1"/>
</dbReference>
<dbReference type="SMR" id="B5FFE3"/>
<dbReference type="GeneID" id="54162739"/>
<dbReference type="KEGG" id="vfm:VFMJ11_0110"/>
<dbReference type="HOGENOM" id="CLU_074878_0_1_6"/>
<dbReference type="UniPathway" id="UPA00070">
    <property type="reaction ID" value="UER00119"/>
</dbReference>
<dbReference type="Proteomes" id="UP000001857">
    <property type="component" value="Chromosome I"/>
</dbReference>
<dbReference type="GO" id="GO:0005737">
    <property type="term" value="C:cytoplasm"/>
    <property type="evidence" value="ECO:0007669"/>
    <property type="project" value="TreeGrafter"/>
</dbReference>
<dbReference type="GO" id="GO:0000287">
    <property type="term" value="F:magnesium ion binding"/>
    <property type="evidence" value="ECO:0007669"/>
    <property type="project" value="UniProtKB-UniRule"/>
</dbReference>
<dbReference type="GO" id="GO:0004588">
    <property type="term" value="F:orotate phosphoribosyltransferase activity"/>
    <property type="evidence" value="ECO:0007669"/>
    <property type="project" value="UniProtKB-UniRule"/>
</dbReference>
<dbReference type="GO" id="GO:0006207">
    <property type="term" value="P:'de novo' pyrimidine nucleobase biosynthetic process"/>
    <property type="evidence" value="ECO:0007669"/>
    <property type="project" value="TreeGrafter"/>
</dbReference>
<dbReference type="GO" id="GO:0044205">
    <property type="term" value="P:'de novo' UMP biosynthetic process"/>
    <property type="evidence" value="ECO:0007669"/>
    <property type="project" value="UniProtKB-UniRule"/>
</dbReference>
<dbReference type="GO" id="GO:0046132">
    <property type="term" value="P:pyrimidine ribonucleoside biosynthetic process"/>
    <property type="evidence" value="ECO:0007669"/>
    <property type="project" value="TreeGrafter"/>
</dbReference>
<dbReference type="CDD" id="cd06223">
    <property type="entry name" value="PRTases_typeI"/>
    <property type="match status" value="1"/>
</dbReference>
<dbReference type="FunFam" id="3.40.50.2020:FF:000008">
    <property type="entry name" value="Orotate phosphoribosyltransferase"/>
    <property type="match status" value="1"/>
</dbReference>
<dbReference type="Gene3D" id="3.40.50.2020">
    <property type="match status" value="1"/>
</dbReference>
<dbReference type="HAMAP" id="MF_01208">
    <property type="entry name" value="PyrE"/>
    <property type="match status" value="1"/>
</dbReference>
<dbReference type="InterPro" id="IPR023031">
    <property type="entry name" value="OPRT"/>
</dbReference>
<dbReference type="InterPro" id="IPR004467">
    <property type="entry name" value="Or_phspho_trans_dom"/>
</dbReference>
<dbReference type="InterPro" id="IPR000836">
    <property type="entry name" value="PRibTrfase_dom"/>
</dbReference>
<dbReference type="InterPro" id="IPR029057">
    <property type="entry name" value="PRTase-like"/>
</dbReference>
<dbReference type="NCBIfam" id="TIGR00336">
    <property type="entry name" value="pyrE"/>
    <property type="match status" value="1"/>
</dbReference>
<dbReference type="PANTHER" id="PTHR46683">
    <property type="entry name" value="OROTATE PHOSPHORIBOSYLTRANSFERASE 1-RELATED"/>
    <property type="match status" value="1"/>
</dbReference>
<dbReference type="PANTHER" id="PTHR46683:SF1">
    <property type="entry name" value="OROTATE PHOSPHORIBOSYLTRANSFERASE 1-RELATED"/>
    <property type="match status" value="1"/>
</dbReference>
<dbReference type="Pfam" id="PF00156">
    <property type="entry name" value="Pribosyltran"/>
    <property type="match status" value="1"/>
</dbReference>
<dbReference type="SUPFAM" id="SSF53271">
    <property type="entry name" value="PRTase-like"/>
    <property type="match status" value="1"/>
</dbReference>
<dbReference type="PROSITE" id="PS00103">
    <property type="entry name" value="PUR_PYR_PR_TRANSFER"/>
    <property type="match status" value="1"/>
</dbReference>
<keyword id="KW-0328">Glycosyltransferase</keyword>
<keyword id="KW-0460">Magnesium</keyword>
<keyword id="KW-0665">Pyrimidine biosynthesis</keyword>
<keyword id="KW-0808">Transferase</keyword>
<evidence type="ECO:0000255" key="1">
    <source>
        <dbReference type="HAMAP-Rule" id="MF_01208"/>
    </source>
</evidence>
<organism>
    <name type="scientific">Aliivibrio fischeri (strain MJ11)</name>
    <name type="common">Vibrio fischeri</name>
    <dbReference type="NCBI Taxonomy" id="388396"/>
    <lineage>
        <taxon>Bacteria</taxon>
        <taxon>Pseudomonadati</taxon>
        <taxon>Pseudomonadota</taxon>
        <taxon>Gammaproteobacteria</taxon>
        <taxon>Vibrionales</taxon>
        <taxon>Vibrionaceae</taxon>
        <taxon>Aliivibrio</taxon>
    </lineage>
</organism>
<name>PYRE_ALIFM</name>
<sequence>MKAYQREFIEFALEKEVLKFGEFTLKSGRKSPYFFNAGLFNTGRDLARLGRFYAAALADSGIEYDVLFGPAYKGIPIATTTAVALADHHDTDKPYCFNRKEAKDHGEGGNLVGSALEGRIMLVDDVITAGTAIRESMEIIQANGADLAGVLVAIDRQEKGKGELSAIQEVERDFNCSIISIVSLTDLISFLEEKGDNAEQLEAVKAYRAEFGI</sequence>
<proteinExistence type="inferred from homology"/>